<reference key="1">
    <citation type="submission" date="2004-11" db="EMBL/GenBank/DDBJ databases">
        <title>Arabidopsis AtFIS1a is involved in the mitochondrial fission.</title>
        <authorList>
            <person name="Mori A."/>
            <person name="Fujimoto M."/>
            <person name="Tsutsumi N."/>
            <person name="Arimura S."/>
        </authorList>
    </citation>
    <scope>NUCLEOTIDE SEQUENCE [MRNA]</scope>
    <source>
        <strain>cv. Columbia</strain>
    </source>
</reference>
<reference key="2">
    <citation type="journal article" date="2000" name="Nature">
        <title>Sequence and analysis of chromosome 5 of the plant Arabidopsis thaliana.</title>
        <authorList>
            <person name="Tabata S."/>
            <person name="Kaneko T."/>
            <person name="Nakamura Y."/>
            <person name="Kotani H."/>
            <person name="Kato T."/>
            <person name="Asamizu E."/>
            <person name="Miyajima N."/>
            <person name="Sasamoto S."/>
            <person name="Kimura T."/>
            <person name="Hosouchi T."/>
            <person name="Kawashima K."/>
            <person name="Kohara M."/>
            <person name="Matsumoto M."/>
            <person name="Matsuno A."/>
            <person name="Muraki A."/>
            <person name="Nakayama S."/>
            <person name="Nakazaki N."/>
            <person name="Naruo K."/>
            <person name="Okumura S."/>
            <person name="Shinpo S."/>
            <person name="Takeuchi C."/>
            <person name="Wada T."/>
            <person name="Watanabe A."/>
            <person name="Yamada M."/>
            <person name="Yasuda M."/>
            <person name="Sato S."/>
            <person name="de la Bastide M."/>
            <person name="Huang E."/>
            <person name="Spiegel L."/>
            <person name="Gnoj L."/>
            <person name="O'Shaughnessy A."/>
            <person name="Preston R."/>
            <person name="Habermann K."/>
            <person name="Murray J."/>
            <person name="Johnson D."/>
            <person name="Rohlfing T."/>
            <person name="Nelson J."/>
            <person name="Stoneking T."/>
            <person name="Pepin K."/>
            <person name="Spieth J."/>
            <person name="Sekhon M."/>
            <person name="Armstrong J."/>
            <person name="Becker M."/>
            <person name="Belter E."/>
            <person name="Cordum H."/>
            <person name="Cordes M."/>
            <person name="Courtney L."/>
            <person name="Courtney W."/>
            <person name="Dante M."/>
            <person name="Du H."/>
            <person name="Edwards J."/>
            <person name="Fryman J."/>
            <person name="Haakensen B."/>
            <person name="Lamar E."/>
            <person name="Latreille P."/>
            <person name="Leonard S."/>
            <person name="Meyer R."/>
            <person name="Mulvaney E."/>
            <person name="Ozersky P."/>
            <person name="Riley A."/>
            <person name="Strowmatt C."/>
            <person name="Wagner-McPherson C."/>
            <person name="Wollam A."/>
            <person name="Yoakum M."/>
            <person name="Bell M."/>
            <person name="Dedhia N."/>
            <person name="Parnell L."/>
            <person name="Shah R."/>
            <person name="Rodriguez M."/>
            <person name="Hoon See L."/>
            <person name="Vil D."/>
            <person name="Baker J."/>
            <person name="Kirchoff K."/>
            <person name="Toth K."/>
            <person name="King L."/>
            <person name="Bahret A."/>
            <person name="Miller B."/>
            <person name="Marra M.A."/>
            <person name="Martienssen R."/>
            <person name="McCombie W.R."/>
            <person name="Wilson R.K."/>
            <person name="Murphy G."/>
            <person name="Bancroft I."/>
            <person name="Volckaert G."/>
            <person name="Wambutt R."/>
            <person name="Duesterhoeft A."/>
            <person name="Stiekema W."/>
            <person name="Pohl T."/>
            <person name="Entian K.-D."/>
            <person name="Terryn N."/>
            <person name="Hartley N."/>
            <person name="Bent E."/>
            <person name="Johnson S."/>
            <person name="Langham S.-A."/>
            <person name="McCullagh B."/>
            <person name="Robben J."/>
            <person name="Grymonprez B."/>
            <person name="Zimmermann W."/>
            <person name="Ramsperger U."/>
            <person name="Wedler H."/>
            <person name="Balke K."/>
            <person name="Wedler E."/>
            <person name="Peters S."/>
            <person name="van Staveren M."/>
            <person name="Dirkse W."/>
            <person name="Mooijman P."/>
            <person name="Klein Lankhorst R."/>
            <person name="Weitzenegger T."/>
            <person name="Bothe G."/>
            <person name="Rose M."/>
            <person name="Hauf J."/>
            <person name="Berneiser S."/>
            <person name="Hempel S."/>
            <person name="Feldpausch M."/>
            <person name="Lamberth S."/>
            <person name="Villarroel R."/>
            <person name="Gielen J."/>
            <person name="Ardiles W."/>
            <person name="Bents O."/>
            <person name="Lemcke K."/>
            <person name="Kolesov G."/>
            <person name="Mayer K.F.X."/>
            <person name="Rudd S."/>
            <person name="Schoof H."/>
            <person name="Schueller C."/>
            <person name="Zaccaria P."/>
            <person name="Mewes H.-W."/>
            <person name="Bevan M."/>
            <person name="Fransz P.F."/>
        </authorList>
    </citation>
    <scope>NUCLEOTIDE SEQUENCE [LARGE SCALE GENOMIC DNA]</scope>
    <source>
        <strain>cv. Columbia</strain>
    </source>
</reference>
<reference key="3">
    <citation type="journal article" date="2017" name="Plant J.">
        <title>Araport11: a complete reannotation of the Arabidopsis thaliana reference genome.</title>
        <authorList>
            <person name="Cheng C.Y."/>
            <person name="Krishnakumar V."/>
            <person name="Chan A.P."/>
            <person name="Thibaud-Nissen F."/>
            <person name="Schobel S."/>
            <person name="Town C.D."/>
        </authorList>
    </citation>
    <scope>GENOME REANNOTATION</scope>
    <source>
        <strain>cv. Columbia</strain>
    </source>
</reference>
<reference key="4">
    <citation type="journal article" date="2002" name="Science">
        <title>Functional annotation of a full-length Arabidopsis cDNA collection.</title>
        <authorList>
            <person name="Seki M."/>
            <person name="Narusaka M."/>
            <person name="Kamiya A."/>
            <person name="Ishida J."/>
            <person name="Satou M."/>
            <person name="Sakurai T."/>
            <person name="Nakajima M."/>
            <person name="Enju A."/>
            <person name="Akiyama K."/>
            <person name="Oono Y."/>
            <person name="Muramatsu M."/>
            <person name="Hayashizaki Y."/>
            <person name="Kawai J."/>
            <person name="Carninci P."/>
            <person name="Itoh M."/>
            <person name="Ishii Y."/>
            <person name="Arakawa T."/>
            <person name="Shibata K."/>
            <person name="Shinagawa A."/>
            <person name="Shinozaki K."/>
        </authorList>
    </citation>
    <scope>NUCLEOTIDE SEQUENCE [LARGE SCALE MRNA]</scope>
    <source>
        <strain>cv. Columbia</strain>
    </source>
</reference>
<reference key="5">
    <citation type="journal article" date="2003" name="Science">
        <title>Empirical analysis of transcriptional activity in the Arabidopsis genome.</title>
        <authorList>
            <person name="Yamada K."/>
            <person name="Lim J."/>
            <person name="Dale J.M."/>
            <person name="Chen H."/>
            <person name="Shinn P."/>
            <person name="Palm C.J."/>
            <person name="Southwick A.M."/>
            <person name="Wu H.C."/>
            <person name="Kim C.J."/>
            <person name="Nguyen M."/>
            <person name="Pham P.K."/>
            <person name="Cheuk R.F."/>
            <person name="Karlin-Newmann G."/>
            <person name="Liu S.X."/>
            <person name="Lam B."/>
            <person name="Sakano H."/>
            <person name="Wu T."/>
            <person name="Yu G."/>
            <person name="Miranda M."/>
            <person name="Quach H.L."/>
            <person name="Tripp M."/>
            <person name="Chang C.H."/>
            <person name="Lee J.M."/>
            <person name="Toriumi M.J."/>
            <person name="Chan M.M."/>
            <person name="Tang C.C."/>
            <person name="Onodera C.S."/>
            <person name="Deng J.M."/>
            <person name="Akiyama K."/>
            <person name="Ansari Y."/>
            <person name="Arakawa T."/>
            <person name="Banh J."/>
            <person name="Banno F."/>
            <person name="Bowser L."/>
            <person name="Brooks S.Y."/>
            <person name="Carninci P."/>
            <person name="Chao Q."/>
            <person name="Choy N."/>
            <person name="Enju A."/>
            <person name="Goldsmith A.D."/>
            <person name="Gurjal M."/>
            <person name="Hansen N.F."/>
            <person name="Hayashizaki Y."/>
            <person name="Johnson-Hopson C."/>
            <person name="Hsuan V.W."/>
            <person name="Iida K."/>
            <person name="Karnes M."/>
            <person name="Khan S."/>
            <person name="Koesema E."/>
            <person name="Ishida J."/>
            <person name="Jiang P.X."/>
            <person name="Jones T."/>
            <person name="Kawai J."/>
            <person name="Kamiya A."/>
            <person name="Meyers C."/>
            <person name="Nakajima M."/>
            <person name="Narusaka M."/>
            <person name="Seki M."/>
            <person name="Sakurai T."/>
            <person name="Satou M."/>
            <person name="Tamse R."/>
            <person name="Vaysberg M."/>
            <person name="Wallender E.K."/>
            <person name="Wong C."/>
            <person name="Yamamura Y."/>
            <person name="Yuan S."/>
            <person name="Shinozaki K."/>
            <person name="Davis R.W."/>
            <person name="Theologis A."/>
            <person name="Ecker J.R."/>
        </authorList>
    </citation>
    <scope>NUCLEOTIDE SEQUENCE [LARGE SCALE MRNA]</scope>
    <source>
        <strain>cv. Columbia</strain>
    </source>
</reference>
<reference key="6">
    <citation type="journal article" date="2008" name="Mol. Plant">
        <title>FISSION1A and FISSION1B proteins mediate the fission of peroxisomes and mitochondria in Arabidopsis.</title>
        <authorList>
            <person name="Zhang X.C."/>
            <person name="Hu J.P."/>
        </authorList>
    </citation>
    <scope>FUNCTION</scope>
    <scope>SUBCELLULAR LOCATION</scope>
    <scope>DOMAIN</scope>
</reference>
<reference key="7">
    <citation type="journal article" date="2008" name="Plant Cell">
        <title>Arabidopsis PEROXIN11c-e, FISSION1b, and DYNAMIN-RELATED PROTEIN3A cooperate in cell cycle-associated replication of peroxisomes.</title>
        <authorList>
            <person name="Lingard M.J."/>
            <person name="Gidda S.K."/>
            <person name="Bingham S."/>
            <person name="Rothstein S.J."/>
            <person name="Mullen R.T."/>
            <person name="Trelease R.N."/>
        </authorList>
    </citation>
    <scope>FUNCTION</scope>
    <scope>INTERACTION WITH PEX11A; PEX11B; PEX11C; PEX11D AND PEX11E</scope>
    <scope>SUBCELLULAR LOCATION</scope>
</reference>
<reference key="8">
    <citation type="journal article" date="2009" name="Plant J.">
        <title>Two small protein families, DYNAMIN-RELATED PROTEIN3 and FISSION1, are required for peroxisome fission in Arabidopsis.</title>
        <authorList>
            <person name="Zhang X."/>
            <person name="Hu J."/>
        </authorList>
    </citation>
    <scope>FUNCTION</scope>
    <scope>SUBCELLULAR LOCATION</scope>
</reference>
<reference key="9">
    <citation type="journal article" date="2010" name="Plant Cell">
        <title>The Arabidopsis chloroplast division protein DYNAMIN-RELATED PROTEIN5B also mediates peroxisome division.</title>
        <authorList>
            <person name="Zhang X."/>
            <person name="Hu J."/>
        </authorList>
    </citation>
    <scope>SUBCELLULAR LOCATION</scope>
</reference>
<proteinExistence type="evidence at protein level"/>
<accession>Q94CK3</accession>
<comment type="function">
    <text evidence="2 3 4">Component of the peroxisomal and mitochondrial division machineries. Plays a role in promoting the fission of mitochondria and peroxisomes. In association with PEX11C, PEX11D, PEX11E and DRP3A, is involved in cell cycle-associated constitutive self-replication of preexisting peroxisomes.</text>
</comment>
<comment type="subunit">
    <text evidence="2">Interacts with PEX11A, PEX11B, PEX11C, PEX11D and PEX11E.</text>
</comment>
<comment type="subcellular location">
    <subcellularLocation>
        <location>Mitochondrion outer membrane</location>
        <topology>Single-pass membrane protein</topology>
    </subcellularLocation>
    <subcellularLocation>
        <location evidence="5">Peroxisome membrane</location>
        <topology evidence="5">Single-pass membrane protein</topology>
    </subcellularLocation>
</comment>
<comment type="domain">
    <text evidence="4">The C-terminus is necessary for mitochondrial or peroxisomal targeting, while the N-terminus is necessary for mitochondrial or peroxisomal fission.</text>
</comment>
<comment type="miscellaneous">
    <text evidence="6 7">Plants silencing FIS1B show reduced growth, increase in the size of mitochondria and decrease in the number of mitochondria per cell (PubMed:18785999). Overexpression of FIS1B increases the fission of peroxisomes and mitochondria (PubMed:19825601).</text>
</comment>
<comment type="similarity">
    <text evidence="5">Belongs to the FIS1 family.</text>
</comment>
<dbReference type="EMBL" id="AB195718">
    <property type="protein sequence ID" value="BAE47516.1"/>
    <property type="molecule type" value="mRNA"/>
</dbReference>
<dbReference type="EMBL" id="AL592312">
    <property type="protein sequence ID" value="CAC42900.1"/>
    <property type="molecule type" value="Genomic_DNA"/>
</dbReference>
<dbReference type="EMBL" id="CP002688">
    <property type="protein sequence ID" value="AED91804.1"/>
    <property type="molecule type" value="Genomic_DNA"/>
</dbReference>
<dbReference type="EMBL" id="AK118241">
    <property type="protein sequence ID" value="BAC42860.1"/>
    <property type="molecule type" value="mRNA"/>
</dbReference>
<dbReference type="EMBL" id="BT005496">
    <property type="protein sequence ID" value="AAO63916.1"/>
    <property type="molecule type" value="mRNA"/>
</dbReference>
<dbReference type="RefSeq" id="NP_568272.1">
    <property type="nucleotide sequence ID" value="NM_121277.4"/>
</dbReference>
<dbReference type="SMR" id="Q94CK3"/>
<dbReference type="BioGRID" id="16392">
    <property type="interactions" value="5"/>
</dbReference>
<dbReference type="FunCoup" id="Q94CK3">
    <property type="interactions" value="2787"/>
</dbReference>
<dbReference type="IntAct" id="Q94CK3">
    <property type="interactions" value="4"/>
</dbReference>
<dbReference type="STRING" id="3702.Q94CK3"/>
<dbReference type="PaxDb" id="3702-AT5G12390.1"/>
<dbReference type="ProteomicsDB" id="230580"/>
<dbReference type="EnsemblPlants" id="AT5G12390.1">
    <property type="protein sequence ID" value="AT5G12390.1"/>
    <property type="gene ID" value="AT5G12390"/>
</dbReference>
<dbReference type="GeneID" id="831114"/>
<dbReference type="Gramene" id="AT5G12390.1">
    <property type="protein sequence ID" value="AT5G12390.1"/>
    <property type="gene ID" value="AT5G12390"/>
</dbReference>
<dbReference type="KEGG" id="ath:AT5G12390"/>
<dbReference type="Araport" id="AT5G12390"/>
<dbReference type="TAIR" id="AT5G12390">
    <property type="gene designation" value="FIS1B"/>
</dbReference>
<dbReference type="eggNOG" id="KOG3364">
    <property type="taxonomic scope" value="Eukaryota"/>
</dbReference>
<dbReference type="HOGENOM" id="CLU_104368_0_0_1"/>
<dbReference type="InParanoid" id="Q94CK3"/>
<dbReference type="OMA" id="ADEFPLC"/>
<dbReference type="OrthoDB" id="421154at2759"/>
<dbReference type="PhylomeDB" id="Q94CK3"/>
<dbReference type="PRO" id="PR:Q94CK3"/>
<dbReference type="Proteomes" id="UP000006548">
    <property type="component" value="Chromosome 5"/>
</dbReference>
<dbReference type="ExpressionAtlas" id="Q94CK3">
    <property type="expression patterns" value="baseline and differential"/>
</dbReference>
<dbReference type="GO" id="GO:0005741">
    <property type="term" value="C:mitochondrial outer membrane"/>
    <property type="evidence" value="ECO:0007669"/>
    <property type="project" value="UniProtKB-SubCell"/>
</dbReference>
<dbReference type="GO" id="GO:0005739">
    <property type="term" value="C:mitochondrion"/>
    <property type="evidence" value="ECO:0000314"/>
    <property type="project" value="TAIR"/>
</dbReference>
<dbReference type="GO" id="GO:0005778">
    <property type="term" value="C:peroxisomal membrane"/>
    <property type="evidence" value="ECO:0007669"/>
    <property type="project" value="UniProtKB-SubCell"/>
</dbReference>
<dbReference type="GO" id="GO:0005777">
    <property type="term" value="C:peroxisome"/>
    <property type="evidence" value="ECO:0000314"/>
    <property type="project" value="TAIR"/>
</dbReference>
<dbReference type="GO" id="GO:0000266">
    <property type="term" value="P:mitochondrial fission"/>
    <property type="evidence" value="ECO:0007669"/>
    <property type="project" value="InterPro"/>
</dbReference>
<dbReference type="GO" id="GO:0016559">
    <property type="term" value="P:peroxisome fission"/>
    <property type="evidence" value="ECO:0000315"/>
    <property type="project" value="TAIR"/>
</dbReference>
<dbReference type="CDD" id="cd12212">
    <property type="entry name" value="Fis1"/>
    <property type="match status" value="1"/>
</dbReference>
<dbReference type="FunFam" id="1.25.40.10:FF:000167">
    <property type="entry name" value="Mitochondrial fission 1 protein"/>
    <property type="match status" value="1"/>
</dbReference>
<dbReference type="Gene3D" id="1.25.40.10">
    <property type="entry name" value="Tetratricopeptide repeat domain"/>
    <property type="match status" value="1"/>
</dbReference>
<dbReference type="InterPro" id="IPR016543">
    <property type="entry name" value="Fis1"/>
</dbReference>
<dbReference type="InterPro" id="IPR033745">
    <property type="entry name" value="Fis1_cytosol"/>
</dbReference>
<dbReference type="InterPro" id="IPR028061">
    <property type="entry name" value="Fis1_TPR_C"/>
</dbReference>
<dbReference type="InterPro" id="IPR028058">
    <property type="entry name" value="Fis1_TPR_N"/>
</dbReference>
<dbReference type="InterPro" id="IPR011990">
    <property type="entry name" value="TPR-like_helical_dom_sf"/>
</dbReference>
<dbReference type="InterPro" id="IPR019734">
    <property type="entry name" value="TPR_rpt"/>
</dbReference>
<dbReference type="PANTHER" id="PTHR13247:SF13">
    <property type="entry name" value="MITOCHONDRIAL FISSION 1 PROTEIN B"/>
    <property type="match status" value="1"/>
</dbReference>
<dbReference type="PANTHER" id="PTHR13247">
    <property type="entry name" value="TETRATRICOPEPTIDE REPEAT PROTEIN 11 TPR REPEAT PROTEIN 11"/>
    <property type="match status" value="1"/>
</dbReference>
<dbReference type="Pfam" id="PF14853">
    <property type="entry name" value="Fis1_TPR_C"/>
    <property type="match status" value="1"/>
</dbReference>
<dbReference type="Pfam" id="PF14852">
    <property type="entry name" value="Fis1_TPR_N"/>
    <property type="match status" value="1"/>
</dbReference>
<dbReference type="PIRSF" id="PIRSF008835">
    <property type="entry name" value="TPR_repeat_11_Fis1"/>
    <property type="match status" value="1"/>
</dbReference>
<dbReference type="SUPFAM" id="SSF48452">
    <property type="entry name" value="TPR-like"/>
    <property type="match status" value="1"/>
</dbReference>
<dbReference type="PROSITE" id="PS50005">
    <property type="entry name" value="TPR"/>
    <property type="match status" value="1"/>
</dbReference>
<dbReference type="PROSITE" id="PS50293">
    <property type="entry name" value="TPR_REGION"/>
    <property type="match status" value="1"/>
</dbReference>
<feature type="chain" id="PRO_0000422805" description="Mitochondrial fission 1 protein B">
    <location>
        <begin position="1"/>
        <end position="167"/>
    </location>
</feature>
<feature type="transmembrane region" description="Helical" evidence="1">
    <location>
        <begin position="144"/>
        <end position="164"/>
    </location>
</feature>
<feature type="repeat" description="TPR">
    <location>
        <begin position="92"/>
        <end position="125"/>
    </location>
</feature>
<protein>
    <recommendedName>
        <fullName>Mitochondrial fission 1 protein B</fullName>
    </recommendedName>
    <alternativeName>
        <fullName>FIS1 homolog B</fullName>
        <shortName>AtFIS1b</shortName>
    </alternativeName>
</protein>
<gene>
    <name type="primary">FIS1B</name>
    <name type="ordered locus">At5g12390</name>
    <name type="ORF">T2L20</name>
</gene>
<name>FIS1B_ARATH</name>
<evidence type="ECO:0000255" key="1"/>
<evidence type="ECO:0000269" key="2">
    <source>
    </source>
</evidence>
<evidence type="ECO:0000269" key="3">
    <source>
    </source>
</evidence>
<evidence type="ECO:0000269" key="4">
    <source>
    </source>
</evidence>
<evidence type="ECO:0000305" key="5"/>
<evidence type="ECO:0000305" key="6">
    <source>
    </source>
</evidence>
<evidence type="ECO:0000305" key="7">
    <source>
    </source>
</evidence>
<sequence length="167" mass="17920">MDAAIGKVFDSVSDFFSGAASASADEFPLCDSDIISGCEKELAEAQDEGRKKECIMRLSWALVHSKMPSDIQRGIAMLEALVVNDTSAMKLREKLYLLALGYYRSGDFSRSRDCIERCLEVEPESGQAQALKKAIEDRIVKDGVIGVGIAVTAVGVVAGIAAAILRS</sequence>
<organism>
    <name type="scientific">Arabidopsis thaliana</name>
    <name type="common">Mouse-ear cress</name>
    <dbReference type="NCBI Taxonomy" id="3702"/>
    <lineage>
        <taxon>Eukaryota</taxon>
        <taxon>Viridiplantae</taxon>
        <taxon>Streptophyta</taxon>
        <taxon>Embryophyta</taxon>
        <taxon>Tracheophyta</taxon>
        <taxon>Spermatophyta</taxon>
        <taxon>Magnoliopsida</taxon>
        <taxon>eudicotyledons</taxon>
        <taxon>Gunneridae</taxon>
        <taxon>Pentapetalae</taxon>
        <taxon>rosids</taxon>
        <taxon>malvids</taxon>
        <taxon>Brassicales</taxon>
        <taxon>Brassicaceae</taxon>
        <taxon>Camelineae</taxon>
        <taxon>Arabidopsis</taxon>
    </lineage>
</organism>
<keyword id="KW-0472">Membrane</keyword>
<keyword id="KW-0496">Mitochondrion</keyword>
<keyword id="KW-1000">Mitochondrion outer membrane</keyword>
<keyword id="KW-0576">Peroxisome</keyword>
<keyword id="KW-0962">Peroxisome biogenesis</keyword>
<keyword id="KW-1185">Reference proteome</keyword>
<keyword id="KW-0802">TPR repeat</keyword>
<keyword id="KW-0812">Transmembrane</keyword>
<keyword id="KW-1133">Transmembrane helix</keyword>